<proteinExistence type="inferred from homology"/>
<keyword id="KW-1003">Cell membrane</keyword>
<keyword id="KW-0342">GTP-binding</keyword>
<keyword id="KW-0378">Hydrolase</keyword>
<keyword id="KW-0472">Membrane</keyword>
<keyword id="KW-0547">Nucleotide-binding</keyword>
<keyword id="KW-0648">Protein biosynthesis</keyword>
<reference key="1">
    <citation type="journal article" date="2008" name="PLoS ONE">
        <title>Genome sequence of a lancefield group C Streptococcus zooepidemicus strain causing epidemic nephritis: new information about an old disease.</title>
        <authorList>
            <person name="Beres S.B."/>
            <person name="Sesso R."/>
            <person name="Pinto S.W.L."/>
            <person name="Hoe N.P."/>
            <person name="Porcella S.F."/>
            <person name="Deleo F.R."/>
            <person name="Musser J.M."/>
        </authorList>
    </citation>
    <scope>NUCLEOTIDE SEQUENCE [LARGE SCALE GENOMIC DNA]</scope>
    <source>
        <strain>MGCS10565</strain>
    </source>
</reference>
<feature type="chain" id="PRO_1000092448" description="Elongation factor 4">
    <location>
        <begin position="1"/>
        <end position="610"/>
    </location>
</feature>
<feature type="domain" description="tr-type G">
    <location>
        <begin position="11"/>
        <end position="193"/>
    </location>
</feature>
<feature type="binding site" evidence="1">
    <location>
        <begin position="23"/>
        <end position="28"/>
    </location>
    <ligand>
        <name>GTP</name>
        <dbReference type="ChEBI" id="CHEBI:37565"/>
    </ligand>
</feature>
<feature type="binding site" evidence="1">
    <location>
        <begin position="140"/>
        <end position="143"/>
    </location>
    <ligand>
        <name>GTP</name>
        <dbReference type="ChEBI" id="CHEBI:37565"/>
    </ligand>
</feature>
<protein>
    <recommendedName>
        <fullName evidence="1">Elongation factor 4</fullName>
        <shortName evidence="1">EF-4</shortName>
        <ecNumber evidence="1">3.6.5.n1</ecNumber>
    </recommendedName>
    <alternativeName>
        <fullName evidence="1">Ribosomal back-translocase LepA</fullName>
    </alternativeName>
</protein>
<accession>B4U3G9</accession>
<sequence>MNSQELKKRQENIRNFSIIAHIDHGKSTLADRILEKTETVSSREMQAQLLDSMDLERERGITIKLNAIELNYKAKNGQDYIFHLIDTPGHVDFTYEVSRSLAACEGAVLVVDAAQGIEAQTLANVYLALDNDLEILPVINKIDLPAADPERVRQEIEDVIGLDASEAVLASAKSGIGIEAILEQIVEKVPAPSGDVDKPLQALIFDSVYDAYRGVILQVRVVNGMVKPGDTIQMMSNGKTFDVTEVGIFTPKAIGRDFLATGDVGYIAASIKTVADTRVGDTVTLATNPAAEPLHGYKQMNPMVFAGIYPIESNKYNDLREALEKLQLNDASLQFEPETSQALGFGFRCGFLGLLHMDVIQERLEREFNIDLIMTAPSVVYHVNTTDGDMLEVSNPSEFPDPTKVDSIEEPYVKAQIMVPQEFVGAVMELAQRKRGDFVTMDYIDDNRVNVIYHIPLAEIVFDFFDKLKSSTRGYASFDYEIAEYRRSQLVKMDILLNGDKVDALSFIVHREFAYERGKLIVEKLKKIIPRQQFEVPIQAAIGQKIVARSDIKALRKNVLAKCYGGDVSRKRKLLEKQKAGKKRMKAIGSVEVPQEAFLSVLSMDDESKK</sequence>
<name>LEPA_STREM</name>
<gene>
    <name evidence="1" type="primary">lepA</name>
    <name type="ordered locus">Sez_1191</name>
</gene>
<comment type="function">
    <text evidence="1">Required for accurate and efficient protein synthesis under certain stress conditions. May act as a fidelity factor of the translation reaction, by catalyzing a one-codon backward translocation of tRNAs on improperly translocated ribosomes. Back-translocation proceeds from a post-translocation (POST) complex to a pre-translocation (PRE) complex, thus giving elongation factor G a second chance to translocate the tRNAs correctly. Binds to ribosomes in a GTP-dependent manner.</text>
</comment>
<comment type="catalytic activity">
    <reaction evidence="1">
        <text>GTP + H2O = GDP + phosphate + H(+)</text>
        <dbReference type="Rhea" id="RHEA:19669"/>
        <dbReference type="ChEBI" id="CHEBI:15377"/>
        <dbReference type="ChEBI" id="CHEBI:15378"/>
        <dbReference type="ChEBI" id="CHEBI:37565"/>
        <dbReference type="ChEBI" id="CHEBI:43474"/>
        <dbReference type="ChEBI" id="CHEBI:58189"/>
        <dbReference type="EC" id="3.6.5.n1"/>
    </reaction>
</comment>
<comment type="subcellular location">
    <subcellularLocation>
        <location evidence="1">Cell membrane</location>
        <topology evidence="1">Peripheral membrane protein</topology>
        <orientation evidence="1">Cytoplasmic side</orientation>
    </subcellularLocation>
</comment>
<comment type="similarity">
    <text evidence="1">Belongs to the TRAFAC class translation factor GTPase superfamily. Classic translation factor GTPase family. LepA subfamily.</text>
</comment>
<organism>
    <name type="scientific">Streptococcus equi subsp. zooepidemicus (strain MGCS10565)</name>
    <dbReference type="NCBI Taxonomy" id="552526"/>
    <lineage>
        <taxon>Bacteria</taxon>
        <taxon>Bacillati</taxon>
        <taxon>Bacillota</taxon>
        <taxon>Bacilli</taxon>
        <taxon>Lactobacillales</taxon>
        <taxon>Streptococcaceae</taxon>
        <taxon>Streptococcus</taxon>
    </lineage>
</organism>
<evidence type="ECO:0000255" key="1">
    <source>
        <dbReference type="HAMAP-Rule" id="MF_00071"/>
    </source>
</evidence>
<dbReference type="EC" id="3.6.5.n1" evidence="1"/>
<dbReference type="EMBL" id="CP001129">
    <property type="protein sequence ID" value="ACG62536.1"/>
    <property type="molecule type" value="Genomic_DNA"/>
</dbReference>
<dbReference type="RefSeq" id="WP_012515801.1">
    <property type="nucleotide sequence ID" value="NC_011134.1"/>
</dbReference>
<dbReference type="SMR" id="B4U3G9"/>
<dbReference type="KEGG" id="sez:Sez_1191"/>
<dbReference type="HOGENOM" id="CLU_009995_3_3_9"/>
<dbReference type="Proteomes" id="UP000001873">
    <property type="component" value="Chromosome"/>
</dbReference>
<dbReference type="GO" id="GO:0005886">
    <property type="term" value="C:plasma membrane"/>
    <property type="evidence" value="ECO:0007669"/>
    <property type="project" value="UniProtKB-SubCell"/>
</dbReference>
<dbReference type="GO" id="GO:0005525">
    <property type="term" value="F:GTP binding"/>
    <property type="evidence" value="ECO:0007669"/>
    <property type="project" value="UniProtKB-UniRule"/>
</dbReference>
<dbReference type="GO" id="GO:0003924">
    <property type="term" value="F:GTPase activity"/>
    <property type="evidence" value="ECO:0007669"/>
    <property type="project" value="UniProtKB-UniRule"/>
</dbReference>
<dbReference type="GO" id="GO:0043022">
    <property type="term" value="F:ribosome binding"/>
    <property type="evidence" value="ECO:0007669"/>
    <property type="project" value="UniProtKB-UniRule"/>
</dbReference>
<dbReference type="GO" id="GO:0003746">
    <property type="term" value="F:translation elongation factor activity"/>
    <property type="evidence" value="ECO:0007669"/>
    <property type="project" value="UniProtKB-UniRule"/>
</dbReference>
<dbReference type="GO" id="GO:0045727">
    <property type="term" value="P:positive regulation of translation"/>
    <property type="evidence" value="ECO:0007669"/>
    <property type="project" value="UniProtKB-UniRule"/>
</dbReference>
<dbReference type="CDD" id="cd03699">
    <property type="entry name" value="EF4_II"/>
    <property type="match status" value="1"/>
</dbReference>
<dbReference type="CDD" id="cd16260">
    <property type="entry name" value="EF4_III"/>
    <property type="match status" value="1"/>
</dbReference>
<dbReference type="CDD" id="cd01890">
    <property type="entry name" value="LepA"/>
    <property type="match status" value="1"/>
</dbReference>
<dbReference type="CDD" id="cd03709">
    <property type="entry name" value="lepA_C"/>
    <property type="match status" value="1"/>
</dbReference>
<dbReference type="FunFam" id="3.40.50.300:FF:000078">
    <property type="entry name" value="Elongation factor 4"/>
    <property type="match status" value="1"/>
</dbReference>
<dbReference type="FunFam" id="2.40.30.10:FF:000015">
    <property type="entry name" value="Translation factor GUF1, mitochondrial"/>
    <property type="match status" value="1"/>
</dbReference>
<dbReference type="FunFam" id="3.30.70.240:FF:000007">
    <property type="entry name" value="Translation factor GUF1, mitochondrial"/>
    <property type="match status" value="1"/>
</dbReference>
<dbReference type="FunFam" id="3.30.70.2570:FF:000001">
    <property type="entry name" value="Translation factor GUF1, mitochondrial"/>
    <property type="match status" value="1"/>
</dbReference>
<dbReference type="FunFam" id="3.30.70.870:FF:000004">
    <property type="entry name" value="Translation factor GUF1, mitochondrial"/>
    <property type="match status" value="1"/>
</dbReference>
<dbReference type="Gene3D" id="3.30.70.240">
    <property type="match status" value="1"/>
</dbReference>
<dbReference type="Gene3D" id="3.30.70.2570">
    <property type="entry name" value="Elongation factor 4, C-terminal domain"/>
    <property type="match status" value="1"/>
</dbReference>
<dbReference type="Gene3D" id="3.30.70.870">
    <property type="entry name" value="Elongation Factor G (Translational Gtpase), domain 3"/>
    <property type="match status" value="1"/>
</dbReference>
<dbReference type="Gene3D" id="3.40.50.300">
    <property type="entry name" value="P-loop containing nucleotide triphosphate hydrolases"/>
    <property type="match status" value="1"/>
</dbReference>
<dbReference type="Gene3D" id="2.40.30.10">
    <property type="entry name" value="Translation factors"/>
    <property type="match status" value="1"/>
</dbReference>
<dbReference type="HAMAP" id="MF_00071">
    <property type="entry name" value="LepA"/>
    <property type="match status" value="1"/>
</dbReference>
<dbReference type="InterPro" id="IPR006297">
    <property type="entry name" value="EF-4"/>
</dbReference>
<dbReference type="InterPro" id="IPR041095">
    <property type="entry name" value="EFG_II"/>
</dbReference>
<dbReference type="InterPro" id="IPR035647">
    <property type="entry name" value="EFG_III/V"/>
</dbReference>
<dbReference type="InterPro" id="IPR000640">
    <property type="entry name" value="EFG_V-like"/>
</dbReference>
<dbReference type="InterPro" id="IPR004161">
    <property type="entry name" value="EFTu-like_2"/>
</dbReference>
<dbReference type="InterPro" id="IPR031157">
    <property type="entry name" value="G_TR_CS"/>
</dbReference>
<dbReference type="InterPro" id="IPR038363">
    <property type="entry name" value="LepA_C_sf"/>
</dbReference>
<dbReference type="InterPro" id="IPR013842">
    <property type="entry name" value="LepA_CTD"/>
</dbReference>
<dbReference type="InterPro" id="IPR035654">
    <property type="entry name" value="LepA_IV"/>
</dbReference>
<dbReference type="InterPro" id="IPR027417">
    <property type="entry name" value="P-loop_NTPase"/>
</dbReference>
<dbReference type="InterPro" id="IPR005225">
    <property type="entry name" value="Small_GTP-bd"/>
</dbReference>
<dbReference type="InterPro" id="IPR000795">
    <property type="entry name" value="T_Tr_GTP-bd_dom"/>
</dbReference>
<dbReference type="InterPro" id="IPR009000">
    <property type="entry name" value="Transl_B-barrel_sf"/>
</dbReference>
<dbReference type="NCBIfam" id="TIGR01393">
    <property type="entry name" value="lepA"/>
    <property type="match status" value="1"/>
</dbReference>
<dbReference type="NCBIfam" id="TIGR00231">
    <property type="entry name" value="small_GTP"/>
    <property type="match status" value="1"/>
</dbReference>
<dbReference type="PANTHER" id="PTHR43512:SF4">
    <property type="entry name" value="TRANSLATION FACTOR GUF1 HOMOLOG, CHLOROPLASTIC"/>
    <property type="match status" value="1"/>
</dbReference>
<dbReference type="PANTHER" id="PTHR43512">
    <property type="entry name" value="TRANSLATION FACTOR GUF1-RELATED"/>
    <property type="match status" value="1"/>
</dbReference>
<dbReference type="Pfam" id="PF00679">
    <property type="entry name" value="EFG_C"/>
    <property type="match status" value="1"/>
</dbReference>
<dbReference type="Pfam" id="PF14492">
    <property type="entry name" value="EFG_III"/>
    <property type="match status" value="1"/>
</dbReference>
<dbReference type="Pfam" id="PF00009">
    <property type="entry name" value="GTP_EFTU"/>
    <property type="match status" value="1"/>
</dbReference>
<dbReference type="Pfam" id="PF03144">
    <property type="entry name" value="GTP_EFTU_D2"/>
    <property type="match status" value="1"/>
</dbReference>
<dbReference type="Pfam" id="PF06421">
    <property type="entry name" value="LepA_C"/>
    <property type="match status" value="1"/>
</dbReference>
<dbReference type="PRINTS" id="PR00315">
    <property type="entry name" value="ELONGATNFCT"/>
</dbReference>
<dbReference type="SMART" id="SM00838">
    <property type="entry name" value="EFG_C"/>
    <property type="match status" value="1"/>
</dbReference>
<dbReference type="SUPFAM" id="SSF54980">
    <property type="entry name" value="EF-G C-terminal domain-like"/>
    <property type="match status" value="2"/>
</dbReference>
<dbReference type="SUPFAM" id="SSF52540">
    <property type="entry name" value="P-loop containing nucleoside triphosphate hydrolases"/>
    <property type="match status" value="1"/>
</dbReference>
<dbReference type="SUPFAM" id="SSF50447">
    <property type="entry name" value="Translation proteins"/>
    <property type="match status" value="1"/>
</dbReference>
<dbReference type="PROSITE" id="PS00301">
    <property type="entry name" value="G_TR_1"/>
    <property type="match status" value="1"/>
</dbReference>
<dbReference type="PROSITE" id="PS51722">
    <property type="entry name" value="G_TR_2"/>
    <property type="match status" value="1"/>
</dbReference>